<proteinExistence type="inferred from homology"/>
<keyword id="KW-1185">Reference proteome</keyword>
<keyword id="KW-0687">Ribonucleoprotein</keyword>
<keyword id="KW-0689">Ribosomal protein</keyword>
<feature type="chain" id="PRO_1000144410" description="Large ribosomal subunit protein bL17">
    <location>
        <begin position="1"/>
        <end position="116"/>
    </location>
</feature>
<accession>B7K223</accession>
<reference key="1">
    <citation type="journal article" date="2011" name="MBio">
        <title>Novel metabolic attributes of the genus Cyanothece, comprising a group of unicellular nitrogen-fixing Cyanobacteria.</title>
        <authorList>
            <person name="Bandyopadhyay A."/>
            <person name="Elvitigala T."/>
            <person name="Welsh E."/>
            <person name="Stockel J."/>
            <person name="Liberton M."/>
            <person name="Min H."/>
            <person name="Sherman L.A."/>
            <person name="Pakrasi H.B."/>
        </authorList>
    </citation>
    <scope>NUCLEOTIDE SEQUENCE [LARGE SCALE GENOMIC DNA]</scope>
    <source>
        <strain>PCC 8801 / RF-1</strain>
    </source>
</reference>
<gene>
    <name evidence="1" type="primary">rplQ</name>
    <name evidence="1" type="synonym">rpl17</name>
    <name type="ordered locus">PCC8801_0227</name>
</gene>
<dbReference type="EMBL" id="CP001287">
    <property type="protein sequence ID" value="ACK64330.1"/>
    <property type="molecule type" value="Genomic_DNA"/>
</dbReference>
<dbReference type="RefSeq" id="WP_012593607.1">
    <property type="nucleotide sequence ID" value="NC_011726.1"/>
</dbReference>
<dbReference type="SMR" id="B7K223"/>
<dbReference type="STRING" id="41431.PCC8801_0227"/>
<dbReference type="KEGG" id="cyp:PCC8801_0227"/>
<dbReference type="eggNOG" id="COG0203">
    <property type="taxonomic scope" value="Bacteria"/>
</dbReference>
<dbReference type="HOGENOM" id="CLU_074407_2_2_3"/>
<dbReference type="OrthoDB" id="9809073at2"/>
<dbReference type="Proteomes" id="UP000008204">
    <property type="component" value="Chromosome"/>
</dbReference>
<dbReference type="GO" id="GO:0022625">
    <property type="term" value="C:cytosolic large ribosomal subunit"/>
    <property type="evidence" value="ECO:0007669"/>
    <property type="project" value="TreeGrafter"/>
</dbReference>
<dbReference type="GO" id="GO:0003735">
    <property type="term" value="F:structural constituent of ribosome"/>
    <property type="evidence" value="ECO:0007669"/>
    <property type="project" value="InterPro"/>
</dbReference>
<dbReference type="GO" id="GO:0006412">
    <property type="term" value="P:translation"/>
    <property type="evidence" value="ECO:0007669"/>
    <property type="project" value="UniProtKB-UniRule"/>
</dbReference>
<dbReference type="FunFam" id="3.90.1030.10:FF:000001">
    <property type="entry name" value="50S ribosomal protein L17"/>
    <property type="match status" value="1"/>
</dbReference>
<dbReference type="Gene3D" id="3.90.1030.10">
    <property type="entry name" value="Ribosomal protein L17"/>
    <property type="match status" value="1"/>
</dbReference>
<dbReference type="HAMAP" id="MF_01368">
    <property type="entry name" value="Ribosomal_bL17"/>
    <property type="match status" value="1"/>
</dbReference>
<dbReference type="InterPro" id="IPR000456">
    <property type="entry name" value="Ribosomal_bL17"/>
</dbReference>
<dbReference type="InterPro" id="IPR047859">
    <property type="entry name" value="Ribosomal_bL17_CS"/>
</dbReference>
<dbReference type="InterPro" id="IPR036373">
    <property type="entry name" value="Ribosomal_bL17_sf"/>
</dbReference>
<dbReference type="NCBIfam" id="TIGR00059">
    <property type="entry name" value="L17"/>
    <property type="match status" value="1"/>
</dbReference>
<dbReference type="PANTHER" id="PTHR14413:SF16">
    <property type="entry name" value="LARGE RIBOSOMAL SUBUNIT PROTEIN BL17M"/>
    <property type="match status" value="1"/>
</dbReference>
<dbReference type="PANTHER" id="PTHR14413">
    <property type="entry name" value="RIBOSOMAL PROTEIN L17"/>
    <property type="match status" value="1"/>
</dbReference>
<dbReference type="Pfam" id="PF01196">
    <property type="entry name" value="Ribosomal_L17"/>
    <property type="match status" value="1"/>
</dbReference>
<dbReference type="SUPFAM" id="SSF64263">
    <property type="entry name" value="Prokaryotic ribosomal protein L17"/>
    <property type="match status" value="1"/>
</dbReference>
<dbReference type="PROSITE" id="PS01167">
    <property type="entry name" value="RIBOSOMAL_L17"/>
    <property type="match status" value="1"/>
</dbReference>
<organism>
    <name type="scientific">Rippkaea orientalis (strain PCC 8801 / RF-1)</name>
    <name type="common">Cyanothece sp. (strain PCC 8801)</name>
    <dbReference type="NCBI Taxonomy" id="41431"/>
    <lineage>
        <taxon>Bacteria</taxon>
        <taxon>Bacillati</taxon>
        <taxon>Cyanobacteriota</taxon>
        <taxon>Cyanophyceae</taxon>
        <taxon>Oscillatoriophycideae</taxon>
        <taxon>Chroococcales</taxon>
        <taxon>Aphanothecaceae</taxon>
        <taxon>Rippkaea</taxon>
        <taxon>Rippkaea orientalis</taxon>
    </lineage>
</organism>
<evidence type="ECO:0000255" key="1">
    <source>
        <dbReference type="HAMAP-Rule" id="MF_01368"/>
    </source>
</evidence>
<evidence type="ECO:0000305" key="2"/>
<protein>
    <recommendedName>
        <fullName evidence="1">Large ribosomal subunit protein bL17</fullName>
    </recommendedName>
    <alternativeName>
        <fullName evidence="2">50S ribosomal protein L17</fullName>
    </alternativeName>
</protein>
<name>RL17_RIPO1</name>
<sequence>MRHQCRVPLLGKPADQRKALLRSLTTELIRHGQIMTTKTRAKAVRSEVERMITLAKDGSLAARRRALGYMYDKQLVHSLFADVQSRYGNRNGGYTRITRTLRRRGDNAEMAIIELV</sequence>
<comment type="subunit">
    <text evidence="1">Part of the 50S ribosomal subunit. Contacts protein L32.</text>
</comment>
<comment type="similarity">
    <text evidence="1">Belongs to the bacterial ribosomal protein bL17 family.</text>
</comment>